<proteinExistence type="inferred from homology"/>
<comment type="function">
    <text evidence="1">Component of the Mediator complex, a coactivator involved in the regulated transcription of nearly all RNA polymerase II-dependent genes. Mediator functions as a bridge to convey information from gene-specific regulatory proteins to the basal RNA polymerase II transcription machinery. Mediator is recruited to promoters by direct interactions with regulatory proteins and serves as a scaffold for the assembly of a functional preinitiation complex with RNA polymerase II and the general transcription factors (By similarity).</text>
</comment>
<comment type="subunit">
    <text evidence="1">Component of the Mediator complex.</text>
</comment>
<comment type="subcellular location">
    <subcellularLocation>
        <location evidence="1">Nucleus</location>
    </subcellularLocation>
</comment>
<comment type="similarity">
    <text evidence="3">Belongs to the Mediator complex subunit 7 family.</text>
</comment>
<protein>
    <recommendedName>
        <fullName>Mediator of RNA polymerase II transcription subunit 7</fullName>
    </recommendedName>
    <alternativeName>
        <fullName>Mediator complex subunit 7</fullName>
    </alternativeName>
</protein>
<keyword id="KW-0010">Activator</keyword>
<keyword id="KW-0539">Nucleus</keyword>
<keyword id="KW-1185">Reference proteome</keyword>
<keyword id="KW-0804">Transcription</keyword>
<keyword id="KW-0805">Transcription regulation</keyword>
<accession>Q7S2D4</accession>
<feature type="chain" id="PRO_0000303205" description="Mediator of RNA polymerase II transcription subunit 7">
    <location>
        <begin position="1"/>
        <end position="347"/>
    </location>
</feature>
<feature type="region of interest" description="Disordered" evidence="2">
    <location>
        <begin position="97"/>
        <end position="172"/>
    </location>
</feature>
<feature type="region of interest" description="Disordered" evidence="2">
    <location>
        <begin position="302"/>
        <end position="326"/>
    </location>
</feature>
<feature type="compositionally biased region" description="Low complexity" evidence="2">
    <location>
        <begin position="108"/>
        <end position="171"/>
    </location>
</feature>
<feature type="compositionally biased region" description="Low complexity" evidence="2">
    <location>
        <begin position="302"/>
        <end position="312"/>
    </location>
</feature>
<sequence>MADTEDDNSALASFFPDPPLFWKAFTPSNLQAYAEIKQQYASQHGIPVEDVVRVPDLPADSDLIYLQPPAEPKDGTWRLYGEPQSLEESLQPLESAGIERLGPPLPGSTTTSTSNTQTTTTDSQSTTQPTTDDTQPTSAFPSQQPTSQLPLPPSSTSAPGGASSGASSTQTHDTLHLHLKRLSKSLLLNFLELLGIMSLDPAAGSQKAADLRTLFLNFHHVLNEYRPHQAREQLIQLMQERLDQTRAETAANRAVAEKARRVLEGLGSVEIPAVDDVNIAGTGTGGGDGEAGYGSAAVPVPVPVGARTGTTVGDRRVGVDGEGAEEEEKMYWEREGMGWGVLDAEFA</sequence>
<evidence type="ECO:0000250" key="1"/>
<evidence type="ECO:0000256" key="2">
    <source>
        <dbReference type="SAM" id="MobiDB-lite"/>
    </source>
</evidence>
<evidence type="ECO:0000305" key="3"/>
<reference key="1">
    <citation type="journal article" date="2003" name="Nature">
        <title>The genome sequence of the filamentous fungus Neurospora crassa.</title>
        <authorList>
            <person name="Galagan J.E."/>
            <person name="Calvo S.E."/>
            <person name="Borkovich K.A."/>
            <person name="Selker E.U."/>
            <person name="Read N.D."/>
            <person name="Jaffe D.B."/>
            <person name="FitzHugh W."/>
            <person name="Ma L.-J."/>
            <person name="Smirnov S."/>
            <person name="Purcell S."/>
            <person name="Rehman B."/>
            <person name="Elkins T."/>
            <person name="Engels R."/>
            <person name="Wang S."/>
            <person name="Nielsen C.B."/>
            <person name="Butler J."/>
            <person name="Endrizzi M."/>
            <person name="Qui D."/>
            <person name="Ianakiev P."/>
            <person name="Bell-Pedersen D."/>
            <person name="Nelson M.A."/>
            <person name="Werner-Washburne M."/>
            <person name="Selitrennikoff C.P."/>
            <person name="Kinsey J.A."/>
            <person name="Braun E.L."/>
            <person name="Zelter A."/>
            <person name="Schulte U."/>
            <person name="Kothe G.O."/>
            <person name="Jedd G."/>
            <person name="Mewes H.-W."/>
            <person name="Staben C."/>
            <person name="Marcotte E."/>
            <person name="Greenberg D."/>
            <person name="Roy A."/>
            <person name="Foley K."/>
            <person name="Naylor J."/>
            <person name="Stange-Thomann N."/>
            <person name="Barrett R."/>
            <person name="Gnerre S."/>
            <person name="Kamal M."/>
            <person name="Kamvysselis M."/>
            <person name="Mauceli E.W."/>
            <person name="Bielke C."/>
            <person name="Rudd S."/>
            <person name="Frishman D."/>
            <person name="Krystofova S."/>
            <person name="Rasmussen C."/>
            <person name="Metzenberg R.L."/>
            <person name="Perkins D.D."/>
            <person name="Kroken S."/>
            <person name="Cogoni C."/>
            <person name="Macino G."/>
            <person name="Catcheside D.E.A."/>
            <person name="Li W."/>
            <person name="Pratt R.J."/>
            <person name="Osmani S.A."/>
            <person name="DeSouza C.P.C."/>
            <person name="Glass N.L."/>
            <person name="Orbach M.J."/>
            <person name="Berglund J.A."/>
            <person name="Voelker R."/>
            <person name="Yarden O."/>
            <person name="Plamann M."/>
            <person name="Seiler S."/>
            <person name="Dunlap J.C."/>
            <person name="Radford A."/>
            <person name="Aramayo R."/>
            <person name="Natvig D.O."/>
            <person name="Alex L.A."/>
            <person name="Mannhaupt G."/>
            <person name="Ebbole D.J."/>
            <person name="Freitag M."/>
            <person name="Paulsen I."/>
            <person name="Sachs M.S."/>
            <person name="Lander E.S."/>
            <person name="Nusbaum C."/>
            <person name="Birren B.W."/>
        </authorList>
    </citation>
    <scope>NUCLEOTIDE SEQUENCE [LARGE SCALE GENOMIC DNA]</scope>
    <source>
        <strain>ATCC 24698 / 74-OR23-1A / CBS 708.71 / DSM 1257 / FGSC 987</strain>
    </source>
</reference>
<dbReference type="EMBL" id="CM002241">
    <property type="protein sequence ID" value="EAA29552.1"/>
    <property type="molecule type" value="Genomic_DNA"/>
</dbReference>
<dbReference type="RefSeq" id="XP_958788.1">
    <property type="nucleotide sequence ID" value="XM_953695.2"/>
</dbReference>
<dbReference type="SMR" id="Q7S2D4"/>
<dbReference type="FunCoup" id="Q7S2D4">
    <property type="interactions" value="699"/>
</dbReference>
<dbReference type="STRING" id="367110.Q7S2D4"/>
<dbReference type="PaxDb" id="5141-EFNCRP00000001609"/>
<dbReference type="EnsemblFungi" id="EAA29552">
    <property type="protein sequence ID" value="EAA29552"/>
    <property type="gene ID" value="NCU05944"/>
</dbReference>
<dbReference type="GeneID" id="3874935"/>
<dbReference type="KEGG" id="ncr:NCU05944"/>
<dbReference type="VEuPathDB" id="FungiDB:NCU05944"/>
<dbReference type="HOGENOM" id="CLU_065214_0_1_1"/>
<dbReference type="InParanoid" id="Q7S2D4"/>
<dbReference type="OrthoDB" id="10253553at2759"/>
<dbReference type="Proteomes" id="UP000001805">
    <property type="component" value="Chromosome 5, Linkage Group VI"/>
</dbReference>
<dbReference type="GO" id="GO:0070847">
    <property type="term" value="C:core mediator complex"/>
    <property type="evidence" value="ECO:0000318"/>
    <property type="project" value="GO_Central"/>
</dbReference>
<dbReference type="GO" id="GO:0016592">
    <property type="term" value="C:mediator complex"/>
    <property type="evidence" value="ECO:0000318"/>
    <property type="project" value="GO_Central"/>
</dbReference>
<dbReference type="GO" id="GO:0003712">
    <property type="term" value="F:transcription coregulator activity"/>
    <property type="evidence" value="ECO:0007669"/>
    <property type="project" value="InterPro"/>
</dbReference>
<dbReference type="GO" id="GO:0006357">
    <property type="term" value="P:regulation of transcription by RNA polymerase II"/>
    <property type="evidence" value="ECO:0000318"/>
    <property type="project" value="GO_Central"/>
</dbReference>
<dbReference type="Gene3D" id="6.10.140.1520">
    <property type="match status" value="1"/>
</dbReference>
<dbReference type="Gene3D" id="6.10.140.200">
    <property type="match status" value="1"/>
</dbReference>
<dbReference type="InterPro" id="IPR037212">
    <property type="entry name" value="Med7/Med21-like"/>
</dbReference>
<dbReference type="InterPro" id="IPR009244">
    <property type="entry name" value="Mediatior_Med7"/>
</dbReference>
<dbReference type="InterPro" id="IPR044888">
    <property type="entry name" value="Mediatior_Med7_sf"/>
</dbReference>
<dbReference type="PANTHER" id="PTHR21428">
    <property type="entry name" value="MEDIATOR OF RNA POLYMERASE II TRANSCRIPTION SUBUNIT 7"/>
    <property type="match status" value="1"/>
</dbReference>
<dbReference type="PANTHER" id="PTHR21428:SF11">
    <property type="entry name" value="MEDIATOR OF RNA POLYMERASE II TRANSCRIPTION SUBUNIT 7"/>
    <property type="match status" value="1"/>
</dbReference>
<dbReference type="Pfam" id="PF05983">
    <property type="entry name" value="Med7"/>
    <property type="match status" value="1"/>
</dbReference>
<dbReference type="SUPFAM" id="SSF140718">
    <property type="entry name" value="Mediator hinge subcomplex-like"/>
    <property type="match status" value="1"/>
</dbReference>
<name>MED7_NEUCR</name>
<gene>
    <name type="primary">med-7</name>
    <name type="ORF">NCU05944</name>
</gene>
<organism>
    <name type="scientific">Neurospora crassa (strain ATCC 24698 / 74-OR23-1A / CBS 708.71 / DSM 1257 / FGSC 987)</name>
    <dbReference type="NCBI Taxonomy" id="367110"/>
    <lineage>
        <taxon>Eukaryota</taxon>
        <taxon>Fungi</taxon>
        <taxon>Dikarya</taxon>
        <taxon>Ascomycota</taxon>
        <taxon>Pezizomycotina</taxon>
        <taxon>Sordariomycetes</taxon>
        <taxon>Sordariomycetidae</taxon>
        <taxon>Sordariales</taxon>
        <taxon>Sordariaceae</taxon>
        <taxon>Neurospora</taxon>
    </lineage>
</organism>